<name>CM39_CONRE</name>
<accession>A0A2I6EDM1</accession>
<comment type="subcellular location">
    <subcellularLocation>
        <location evidence="5">Secreted</location>
    </subcellularLocation>
</comment>
<comment type="tissue specificity">
    <text evidence="5">Expressed by the venom duct.</text>
</comment>
<comment type="domain">
    <text evidence="4">The cysteine framework is III (CC-C-C-CC). Classified in the M-1 branch, since 1 residue stands between the fourth and the fifth cysteine residues.</text>
</comment>
<comment type="similarity">
    <text evidence="4">Belongs to the conotoxin M superfamily.</text>
</comment>
<keyword id="KW-1015">Disulfide bond</keyword>
<keyword id="KW-0964">Secreted</keyword>
<keyword id="KW-0732">Signal</keyword>
<keyword id="KW-0800">Toxin</keyword>
<sequence>LLFPLSALPLDGDQPADQPAERMQDISPEQNFWFDLVERGCCTIWNCVQLPGCPCC</sequence>
<dbReference type="EMBL" id="MF588943">
    <property type="protein sequence ID" value="AUJ88067.1"/>
    <property type="molecule type" value="mRNA"/>
</dbReference>
<dbReference type="GO" id="GO:0005576">
    <property type="term" value="C:extracellular region"/>
    <property type="evidence" value="ECO:0007669"/>
    <property type="project" value="UniProtKB-SubCell"/>
</dbReference>
<dbReference type="GO" id="GO:0008200">
    <property type="term" value="F:ion channel inhibitor activity"/>
    <property type="evidence" value="ECO:0007669"/>
    <property type="project" value="InterPro"/>
</dbReference>
<dbReference type="GO" id="GO:0090729">
    <property type="term" value="F:toxin activity"/>
    <property type="evidence" value="ECO:0007669"/>
    <property type="project" value="UniProtKB-KW"/>
</dbReference>
<dbReference type="InterPro" id="IPR004214">
    <property type="entry name" value="Conotoxin"/>
</dbReference>
<dbReference type="Pfam" id="PF02950">
    <property type="entry name" value="Conotoxin"/>
    <property type="match status" value="1"/>
</dbReference>
<reference key="1">
    <citation type="journal article" date="2017" name="FEBS J.">
        <title>Structural plasticity of Mini-M conotoxins: expression of all mini-M subtypes by Conus regius.</title>
        <authorList>
            <person name="Franco A."/>
            <person name="Dovell S."/>
            <person name="Moller C."/>
            <person name="Grandal M."/>
            <person name="Clark E."/>
            <person name="Mari F."/>
        </authorList>
    </citation>
    <scope>NUCLEOTIDE SEQUENCE [MRNA]</scope>
    <source>
        <tissue>Venom duct</tissue>
    </source>
</reference>
<protein>
    <recommendedName>
        <fullName evidence="3">Conotoxin reg3.9</fullName>
        <shortName evidence="6">Rg3.9</shortName>
    </recommendedName>
</protein>
<evidence type="ECO:0000250" key="1">
    <source>
        <dbReference type="UniProtKB" id="Q5EHP3"/>
    </source>
</evidence>
<evidence type="ECO:0000256" key="2">
    <source>
        <dbReference type="SAM" id="MobiDB-lite"/>
    </source>
</evidence>
<evidence type="ECO:0000303" key="3">
    <source>
    </source>
</evidence>
<evidence type="ECO:0000305" key="4"/>
<evidence type="ECO:0000305" key="5">
    <source>
    </source>
</evidence>
<evidence type="ECO:0000312" key="6">
    <source>
        <dbReference type="EMBL" id="AUJ88067.1"/>
    </source>
</evidence>
<feature type="signal peptide" evidence="4">
    <location>
        <begin position="1" status="less than"/>
        <end position="8"/>
    </location>
</feature>
<feature type="propeptide" id="PRO_0000444776" evidence="5">
    <location>
        <begin position="9"/>
        <end position="40"/>
    </location>
</feature>
<feature type="peptide" id="PRO_0000444777" description="Conotoxin reg3.9" evidence="5">
    <location>
        <begin position="41"/>
        <end position="56"/>
    </location>
</feature>
<feature type="region of interest" description="Disordered" evidence="2">
    <location>
        <begin position="1"/>
        <end position="22"/>
    </location>
</feature>
<feature type="disulfide bond" evidence="1">
    <location>
        <begin position="41"/>
        <end position="55"/>
    </location>
</feature>
<feature type="disulfide bond" evidence="1">
    <location>
        <begin position="42"/>
        <end position="53"/>
    </location>
</feature>
<feature type="disulfide bond" evidence="1">
    <location>
        <begin position="47"/>
        <end position="56"/>
    </location>
</feature>
<feature type="non-terminal residue" evidence="6">
    <location>
        <position position="1"/>
    </location>
</feature>
<proteinExistence type="evidence at transcript level"/>
<organism>
    <name type="scientific">Conus regius</name>
    <name type="common">Crown cone</name>
    <dbReference type="NCBI Taxonomy" id="101314"/>
    <lineage>
        <taxon>Eukaryota</taxon>
        <taxon>Metazoa</taxon>
        <taxon>Spiralia</taxon>
        <taxon>Lophotrochozoa</taxon>
        <taxon>Mollusca</taxon>
        <taxon>Gastropoda</taxon>
        <taxon>Caenogastropoda</taxon>
        <taxon>Neogastropoda</taxon>
        <taxon>Conoidea</taxon>
        <taxon>Conidae</taxon>
        <taxon>Conus</taxon>
        <taxon>Stephanoconus</taxon>
    </lineage>
</organism>